<organism>
    <name type="scientific">Gloeobacter violaceus (strain ATCC 29082 / PCC 7421)</name>
    <dbReference type="NCBI Taxonomy" id="251221"/>
    <lineage>
        <taxon>Bacteria</taxon>
        <taxon>Bacillati</taxon>
        <taxon>Cyanobacteriota</taxon>
        <taxon>Cyanophyceae</taxon>
        <taxon>Gloeobacterales</taxon>
        <taxon>Gloeobacteraceae</taxon>
        <taxon>Gloeobacter</taxon>
    </lineage>
</organism>
<reference key="1">
    <citation type="journal article" date="2003" name="DNA Res.">
        <title>Complete genome structure of Gloeobacter violaceus PCC 7421, a cyanobacterium that lacks thylakoids.</title>
        <authorList>
            <person name="Nakamura Y."/>
            <person name="Kaneko T."/>
            <person name="Sato S."/>
            <person name="Mimuro M."/>
            <person name="Miyashita H."/>
            <person name="Tsuchiya T."/>
            <person name="Sasamoto S."/>
            <person name="Watanabe A."/>
            <person name="Kawashima K."/>
            <person name="Kishida Y."/>
            <person name="Kiyokawa C."/>
            <person name="Kohara M."/>
            <person name="Matsumoto M."/>
            <person name="Matsuno A."/>
            <person name="Nakazaki N."/>
            <person name="Shimpo S."/>
            <person name="Takeuchi C."/>
            <person name="Yamada M."/>
            <person name="Tabata S."/>
        </authorList>
    </citation>
    <scope>NUCLEOTIDE SEQUENCE [LARGE SCALE GENOMIC DNA]</scope>
    <source>
        <strain>ATCC 29082 / PCC 7421</strain>
    </source>
</reference>
<sequence>MSRYLFSSESVTEGHPDKICDQISDTILDALLTQDPRSRVAAEVVVNTGMVVVTGEITTTANVNFTKLVRDKIREIGYTEADNGFSADSCAVFLALDEQSPEIAQGVSCALEVRTSEEDALDRIGAGDQGLMFGFACTETPELMPLPISVAHRLTRRLAQVRKDGTLAYLKPDGKAQVTVEYERKDGVDRPGRIDTILISTQHAAVIDDLSDNDAVQARIKADLQTHVIGPVFADLDIRPDAQTRLLVNPSGRFVIGGPQGDSGLTGRKIIVDTYGGYARHGGGAFSGKDPTKVDRSAAYAARYVAKNIVAAELADRCEVQVAYAIGVARPVSIFVETFGTGRVSDEALMLLVREHFDLRPAAILRDFDLCRLPAQRGGRFYQDVAAYGHLGRPDLDLPWEHTDKAATLKQAIQTAAAV</sequence>
<gene>
    <name evidence="1" type="primary">metK</name>
    <name type="ordered locus">gll2577</name>
</gene>
<dbReference type="EC" id="2.5.1.6" evidence="1"/>
<dbReference type="EMBL" id="BA000045">
    <property type="protein sequence ID" value="BAC90518.1"/>
    <property type="molecule type" value="Genomic_DNA"/>
</dbReference>
<dbReference type="RefSeq" id="NP_925523.1">
    <property type="nucleotide sequence ID" value="NC_005125.1"/>
</dbReference>
<dbReference type="RefSeq" id="WP_011142571.1">
    <property type="nucleotide sequence ID" value="NC_005125.1"/>
</dbReference>
<dbReference type="SMR" id="Q7NHG0"/>
<dbReference type="FunCoup" id="Q7NHG0">
    <property type="interactions" value="390"/>
</dbReference>
<dbReference type="STRING" id="251221.gene:10760077"/>
<dbReference type="EnsemblBacteria" id="BAC90518">
    <property type="protein sequence ID" value="BAC90518"/>
    <property type="gene ID" value="BAC90518"/>
</dbReference>
<dbReference type="KEGG" id="gvi:gll2577"/>
<dbReference type="PATRIC" id="fig|251221.4.peg.2615"/>
<dbReference type="eggNOG" id="COG0192">
    <property type="taxonomic scope" value="Bacteria"/>
</dbReference>
<dbReference type="HOGENOM" id="CLU_041802_1_1_3"/>
<dbReference type="InParanoid" id="Q7NHG0"/>
<dbReference type="OrthoDB" id="9801686at2"/>
<dbReference type="PhylomeDB" id="Q7NHG0"/>
<dbReference type="UniPathway" id="UPA00315">
    <property type="reaction ID" value="UER00080"/>
</dbReference>
<dbReference type="Proteomes" id="UP000000557">
    <property type="component" value="Chromosome"/>
</dbReference>
<dbReference type="GO" id="GO:0005829">
    <property type="term" value="C:cytosol"/>
    <property type="evidence" value="ECO:0000318"/>
    <property type="project" value="GO_Central"/>
</dbReference>
<dbReference type="GO" id="GO:0005524">
    <property type="term" value="F:ATP binding"/>
    <property type="evidence" value="ECO:0007669"/>
    <property type="project" value="UniProtKB-UniRule"/>
</dbReference>
<dbReference type="GO" id="GO:0000287">
    <property type="term" value="F:magnesium ion binding"/>
    <property type="evidence" value="ECO:0007669"/>
    <property type="project" value="UniProtKB-UniRule"/>
</dbReference>
<dbReference type="GO" id="GO:0004478">
    <property type="term" value="F:methionine adenosyltransferase activity"/>
    <property type="evidence" value="ECO:0000318"/>
    <property type="project" value="GO_Central"/>
</dbReference>
<dbReference type="GO" id="GO:0006730">
    <property type="term" value="P:one-carbon metabolic process"/>
    <property type="evidence" value="ECO:0007669"/>
    <property type="project" value="UniProtKB-KW"/>
</dbReference>
<dbReference type="GO" id="GO:0006556">
    <property type="term" value="P:S-adenosylmethionine biosynthetic process"/>
    <property type="evidence" value="ECO:0000318"/>
    <property type="project" value="GO_Central"/>
</dbReference>
<dbReference type="CDD" id="cd18079">
    <property type="entry name" value="S-AdoMet_synt"/>
    <property type="match status" value="1"/>
</dbReference>
<dbReference type="FunFam" id="3.30.300.10:FF:000003">
    <property type="entry name" value="S-adenosylmethionine synthase"/>
    <property type="match status" value="1"/>
</dbReference>
<dbReference type="Gene3D" id="3.30.300.10">
    <property type="match status" value="3"/>
</dbReference>
<dbReference type="HAMAP" id="MF_00086">
    <property type="entry name" value="S_AdoMet_synth1"/>
    <property type="match status" value="1"/>
</dbReference>
<dbReference type="InterPro" id="IPR022631">
    <property type="entry name" value="ADOMET_SYNTHASE_CS"/>
</dbReference>
<dbReference type="InterPro" id="IPR022630">
    <property type="entry name" value="S-AdoMet_synt_C"/>
</dbReference>
<dbReference type="InterPro" id="IPR022629">
    <property type="entry name" value="S-AdoMet_synt_central"/>
</dbReference>
<dbReference type="InterPro" id="IPR022628">
    <property type="entry name" value="S-AdoMet_synt_N"/>
</dbReference>
<dbReference type="InterPro" id="IPR002133">
    <property type="entry name" value="S-AdoMet_synthetase"/>
</dbReference>
<dbReference type="InterPro" id="IPR022636">
    <property type="entry name" value="S-AdoMet_synthetase_sfam"/>
</dbReference>
<dbReference type="NCBIfam" id="TIGR01034">
    <property type="entry name" value="metK"/>
    <property type="match status" value="1"/>
</dbReference>
<dbReference type="PANTHER" id="PTHR11964">
    <property type="entry name" value="S-ADENOSYLMETHIONINE SYNTHETASE"/>
    <property type="match status" value="1"/>
</dbReference>
<dbReference type="Pfam" id="PF02773">
    <property type="entry name" value="S-AdoMet_synt_C"/>
    <property type="match status" value="1"/>
</dbReference>
<dbReference type="Pfam" id="PF02772">
    <property type="entry name" value="S-AdoMet_synt_M"/>
    <property type="match status" value="1"/>
</dbReference>
<dbReference type="Pfam" id="PF00438">
    <property type="entry name" value="S-AdoMet_synt_N"/>
    <property type="match status" value="1"/>
</dbReference>
<dbReference type="PIRSF" id="PIRSF000497">
    <property type="entry name" value="MAT"/>
    <property type="match status" value="1"/>
</dbReference>
<dbReference type="SUPFAM" id="SSF55973">
    <property type="entry name" value="S-adenosylmethionine synthetase"/>
    <property type="match status" value="3"/>
</dbReference>
<dbReference type="PROSITE" id="PS00376">
    <property type="entry name" value="ADOMET_SYNTHASE_1"/>
    <property type="match status" value="1"/>
</dbReference>
<dbReference type="PROSITE" id="PS00377">
    <property type="entry name" value="ADOMET_SYNTHASE_2"/>
    <property type="match status" value="1"/>
</dbReference>
<accession>Q7NHG0</accession>
<keyword id="KW-0067">ATP-binding</keyword>
<keyword id="KW-0963">Cytoplasm</keyword>
<keyword id="KW-0460">Magnesium</keyword>
<keyword id="KW-0479">Metal-binding</keyword>
<keyword id="KW-0547">Nucleotide-binding</keyword>
<keyword id="KW-0554">One-carbon metabolism</keyword>
<keyword id="KW-0630">Potassium</keyword>
<keyword id="KW-1185">Reference proteome</keyword>
<keyword id="KW-0808">Transferase</keyword>
<name>METK_GLOVI</name>
<evidence type="ECO:0000255" key="1">
    <source>
        <dbReference type="HAMAP-Rule" id="MF_00086"/>
    </source>
</evidence>
<proteinExistence type="inferred from homology"/>
<protein>
    <recommendedName>
        <fullName evidence="1">S-adenosylmethionine synthase</fullName>
        <shortName evidence="1">AdoMet synthase</shortName>
        <ecNumber evidence="1">2.5.1.6</ecNumber>
    </recommendedName>
    <alternativeName>
        <fullName evidence="1">MAT</fullName>
    </alternativeName>
    <alternativeName>
        <fullName evidence="1">Methionine adenosyltransferase</fullName>
    </alternativeName>
</protein>
<comment type="function">
    <text evidence="1">Catalyzes the formation of S-adenosylmethionine (AdoMet) from methionine and ATP. The overall synthetic reaction is composed of two sequential steps, AdoMet formation and the subsequent tripolyphosphate hydrolysis which occurs prior to release of AdoMet from the enzyme.</text>
</comment>
<comment type="catalytic activity">
    <reaction evidence="1">
        <text>L-methionine + ATP + H2O = S-adenosyl-L-methionine + phosphate + diphosphate</text>
        <dbReference type="Rhea" id="RHEA:21080"/>
        <dbReference type="ChEBI" id="CHEBI:15377"/>
        <dbReference type="ChEBI" id="CHEBI:30616"/>
        <dbReference type="ChEBI" id="CHEBI:33019"/>
        <dbReference type="ChEBI" id="CHEBI:43474"/>
        <dbReference type="ChEBI" id="CHEBI:57844"/>
        <dbReference type="ChEBI" id="CHEBI:59789"/>
        <dbReference type="EC" id="2.5.1.6"/>
    </reaction>
</comment>
<comment type="cofactor">
    <cofactor evidence="1">
        <name>Mg(2+)</name>
        <dbReference type="ChEBI" id="CHEBI:18420"/>
    </cofactor>
    <text evidence="1">Binds 2 divalent ions per subunit.</text>
</comment>
<comment type="cofactor">
    <cofactor evidence="1">
        <name>K(+)</name>
        <dbReference type="ChEBI" id="CHEBI:29103"/>
    </cofactor>
    <text evidence="1">Binds 1 potassium ion per subunit.</text>
</comment>
<comment type="pathway">
    <text evidence="1">Amino-acid biosynthesis; S-adenosyl-L-methionine biosynthesis; S-adenosyl-L-methionine from L-methionine: step 1/1.</text>
</comment>
<comment type="subunit">
    <text evidence="1">Homotetramer; dimer of dimers.</text>
</comment>
<comment type="subcellular location">
    <subcellularLocation>
        <location evidence="1">Cytoplasm</location>
    </subcellularLocation>
</comment>
<comment type="similarity">
    <text evidence="1">Belongs to the AdoMet synthase family.</text>
</comment>
<feature type="chain" id="PRO_0000174527" description="S-adenosylmethionine synthase">
    <location>
        <begin position="1"/>
        <end position="419"/>
    </location>
</feature>
<feature type="region of interest" description="Flexible loop" evidence="1">
    <location>
        <begin position="99"/>
        <end position="109"/>
    </location>
</feature>
<feature type="binding site" description="in other chain" evidence="1">
    <location>
        <position position="15"/>
    </location>
    <ligand>
        <name>ATP</name>
        <dbReference type="ChEBI" id="CHEBI:30616"/>
        <note>ligand shared between two neighboring subunits</note>
    </ligand>
</feature>
<feature type="binding site" evidence="1">
    <location>
        <position position="17"/>
    </location>
    <ligand>
        <name>Mg(2+)</name>
        <dbReference type="ChEBI" id="CHEBI:18420"/>
    </ligand>
</feature>
<feature type="binding site" evidence="1">
    <location>
        <position position="43"/>
    </location>
    <ligand>
        <name>K(+)</name>
        <dbReference type="ChEBI" id="CHEBI:29103"/>
    </ligand>
</feature>
<feature type="binding site" description="in other chain" evidence="1">
    <location>
        <position position="56"/>
    </location>
    <ligand>
        <name>L-methionine</name>
        <dbReference type="ChEBI" id="CHEBI:57844"/>
        <note>ligand shared between two neighboring subunits</note>
    </ligand>
</feature>
<feature type="binding site" description="in other chain" evidence="1">
    <location>
        <position position="99"/>
    </location>
    <ligand>
        <name>L-methionine</name>
        <dbReference type="ChEBI" id="CHEBI:57844"/>
        <note>ligand shared between two neighboring subunits</note>
    </ligand>
</feature>
<feature type="binding site" description="in other chain" evidence="1">
    <location>
        <begin position="173"/>
        <end position="175"/>
    </location>
    <ligand>
        <name>ATP</name>
        <dbReference type="ChEBI" id="CHEBI:30616"/>
        <note>ligand shared between two neighboring subunits</note>
    </ligand>
</feature>
<feature type="binding site" description="in other chain" evidence="1">
    <location>
        <begin position="253"/>
        <end position="254"/>
    </location>
    <ligand>
        <name>ATP</name>
        <dbReference type="ChEBI" id="CHEBI:30616"/>
        <note>ligand shared between two neighboring subunits</note>
    </ligand>
</feature>
<feature type="binding site" evidence="1">
    <location>
        <position position="262"/>
    </location>
    <ligand>
        <name>ATP</name>
        <dbReference type="ChEBI" id="CHEBI:30616"/>
        <note>ligand shared between two neighboring subunits</note>
    </ligand>
</feature>
<feature type="binding site" evidence="1">
    <location>
        <position position="262"/>
    </location>
    <ligand>
        <name>L-methionine</name>
        <dbReference type="ChEBI" id="CHEBI:57844"/>
        <note>ligand shared between two neighboring subunits</note>
    </ligand>
</feature>
<feature type="binding site" description="in other chain" evidence="1">
    <location>
        <begin position="268"/>
        <end position="269"/>
    </location>
    <ligand>
        <name>ATP</name>
        <dbReference type="ChEBI" id="CHEBI:30616"/>
        <note>ligand shared between two neighboring subunits</note>
    </ligand>
</feature>
<feature type="binding site" evidence="1">
    <location>
        <position position="285"/>
    </location>
    <ligand>
        <name>ATP</name>
        <dbReference type="ChEBI" id="CHEBI:30616"/>
        <note>ligand shared between two neighboring subunits</note>
    </ligand>
</feature>
<feature type="binding site" evidence="1">
    <location>
        <position position="289"/>
    </location>
    <ligand>
        <name>ATP</name>
        <dbReference type="ChEBI" id="CHEBI:30616"/>
        <note>ligand shared between two neighboring subunits</note>
    </ligand>
</feature>
<feature type="binding site" description="in other chain" evidence="1">
    <location>
        <position position="293"/>
    </location>
    <ligand>
        <name>L-methionine</name>
        <dbReference type="ChEBI" id="CHEBI:57844"/>
        <note>ligand shared between two neighboring subunits</note>
    </ligand>
</feature>